<accession>Q149F3</accession>
<accession>O88180</accession>
<accession>Q9CY91</accession>
<proteinExistence type="evidence at protein level"/>
<sequence length="632" mass="69147">MDLGSSSDSAPDCWDQVDMEAPGSAPSGDGIAPAAMAAAEAAEAEAQRKHLSLAFSSQLNIHAKPFVPSVSAAEFVPSFLPGSAQPPAPTASSCDETCIGGAGEPEGKRMEWGAPVEPSKDGPLVSWEGSSSVVTMELSEPVVENGEVEMALEESWELKEVSEAKPEASLGDAGPPEESVKEVMEEKEEVRKSKSVSIPSGAPKKEHVNVVFIGHVDAGKSTIGGQIMFLTGMVDRRTLEKYEREAKEKNRETWYLSWALDTNQEERDKGKTVEVGRAYFETEKKHFTILDAPGHKSFVPNMIGGASQADLAVLVISARKGEFETGFEKGGQTREHAMLAKTAGVKYLIVLINKMDDPTVDWSSERYEECKEKLVPFLKKVGFSPKKDIHFMPCSGLTGANIKEQSDFCPWYTGLPFIPYLDSLPNFNRSIDGPIRLPIVDKYKDMGTVVLGKLESGSIFKGQQLVMMPNKHSVEVLGIVSDDAETDFVAPGENLKIRLKGIEEEEILPGFILCEPSNLCHSGRTFDVQIVIIEHKSIICPGYNAVLHIHTCIEEVEITALISLVDKKSGEKSKTRPRFVKQDQVCIARLRTAGTICLETFKDFPQMGRFTLRDEGKTIAIGKVLKLVPEKD</sequence>
<comment type="function">
    <text evidence="2 5">GTPase component of the eRF1-eRF3-GTP ternary complex, a ternary complex that mediates translation termination in response to the termination codons UAA, UAG and UGA (PubMed:12354098). GSPT2/ERF3B mediates ETF1/ERF1 delivery to stop codons: The eRF1-eRF3-GTP complex binds to a stop codon in the ribosomal A-site (By similarity). GTP hydrolysis by GSPT2/ERF3B induces a conformational change that leads to its dissociation, permitting ETF1/ERF1 to accommodate fully in the A-site (By similarity). Component of the transient SURF complex which recruits UPF1 to stalled ribosomes in the context of nonsense-mediated decay (NMD) of mRNAs containing premature stop codons (By similarity).</text>
</comment>
<comment type="catalytic activity">
    <reaction evidence="2">
        <text>GTP + H2O = GDP + phosphate + H(+)</text>
        <dbReference type="Rhea" id="RHEA:19669"/>
        <dbReference type="ChEBI" id="CHEBI:15377"/>
        <dbReference type="ChEBI" id="CHEBI:15378"/>
        <dbReference type="ChEBI" id="CHEBI:37565"/>
        <dbReference type="ChEBI" id="CHEBI:43474"/>
        <dbReference type="ChEBI" id="CHEBI:58189"/>
    </reaction>
    <physiologicalReaction direction="left-to-right" evidence="2">
        <dbReference type="Rhea" id="RHEA:19670"/>
    </physiologicalReaction>
</comment>
<comment type="subunit">
    <text evidence="2 5">Component of the eRF1-eRF3-GTP ternary complex, composed of ETF1/ERF1 and ERF3 (GSPT1/ERF3A or GSPT2/ERF3B) and GTP (PubMed:12354098). Component of the transient SURF (SMG1-UPF1-eRF1-eRF3) complex (By similarity). Interacts with UPF1 and PABPC1 (By similarity).</text>
</comment>
<comment type="subcellular location">
    <subcellularLocation>
        <location evidence="8">Cytoplasm</location>
    </subcellularLocation>
</comment>
<comment type="tissue specificity">
    <text evidence="7">Highly expressed in brain. Moderately expressed in spleen and lung. Weakly expressed in heart, liver and kidney. Expression during the cell-cycle progression is constant.</text>
</comment>
<comment type="developmental stage">
    <text evidence="6">Barely detectable at 15 dpc, increased after birth to reach a maximum at P15.</text>
</comment>
<comment type="similarity">
    <text evidence="3">Belongs to the TRAFAC class translation factor GTPase superfamily. Classic translation factor GTPase family. ERF3 subfamily.</text>
</comment>
<comment type="sequence caution" evidence="8">
    <conflict type="erroneous initiation">
        <sequence resource="EMBL-CDS" id="BAA32527"/>
    </conflict>
</comment>
<comment type="sequence caution" evidence="8">
    <conflict type="frameshift">
        <sequence resource="EMBL-CDS" id="BAB31621"/>
    </conflict>
</comment>
<gene>
    <name type="primary">Gspt2</name>
    <name type="synonym">Erf3b</name>
</gene>
<protein>
    <recommendedName>
        <fullName>Eukaryotic peptide chain release factor GTP-binding subunit ERF3B</fullName>
        <shortName>Eukaryotic peptide chain release factor subunit 3b</shortName>
        <shortName>eRF3b</shortName>
        <ecNumber evidence="2">3.6.5.-</ecNumber>
    </recommendedName>
    <alternativeName>
        <fullName>G1 to S phase transition protein 2 homolog</fullName>
    </alternativeName>
</protein>
<name>ERF3B_MOUSE</name>
<feature type="chain" id="PRO_0000327257" description="Eukaryotic peptide chain release factor GTP-binding subunit ERF3B">
    <location>
        <begin position="1"/>
        <end position="632"/>
    </location>
</feature>
<feature type="domain" description="tr-type G" evidence="3">
    <location>
        <begin position="205"/>
        <end position="429"/>
    </location>
</feature>
<feature type="region of interest" description="Disordered" evidence="4">
    <location>
        <begin position="1"/>
        <end position="31"/>
    </location>
</feature>
<feature type="region of interest" description="Disordered" evidence="4">
    <location>
        <begin position="162"/>
        <end position="200"/>
    </location>
</feature>
<feature type="region of interest" description="G1" evidence="3">
    <location>
        <begin position="214"/>
        <end position="221"/>
    </location>
</feature>
<feature type="region of interest" description="G2" evidence="3">
    <location>
        <begin position="270"/>
        <end position="274"/>
    </location>
</feature>
<feature type="region of interest" description="G3" evidence="3">
    <location>
        <begin position="291"/>
        <end position="294"/>
    </location>
</feature>
<feature type="region of interest" description="G4" evidence="3">
    <location>
        <begin position="353"/>
        <end position="356"/>
    </location>
</feature>
<feature type="region of interest" description="G5" evidence="3">
    <location>
        <begin position="395"/>
        <end position="397"/>
    </location>
</feature>
<feature type="compositionally biased region" description="Basic and acidic residues" evidence="4">
    <location>
        <begin position="178"/>
        <end position="192"/>
    </location>
</feature>
<feature type="binding site" evidence="1">
    <location>
        <begin position="217"/>
        <end position="222"/>
    </location>
    <ligand>
        <name>GTP</name>
        <dbReference type="ChEBI" id="CHEBI:37565"/>
    </ligand>
</feature>
<feature type="binding site" evidence="1">
    <location>
        <begin position="353"/>
        <end position="356"/>
    </location>
    <ligand>
        <name>GTP</name>
        <dbReference type="ChEBI" id="CHEBI:37565"/>
    </ligand>
</feature>
<feature type="binding site" evidence="1">
    <location>
        <begin position="395"/>
        <end position="397"/>
    </location>
    <ligand>
        <name>GTP</name>
        <dbReference type="ChEBI" id="CHEBI:37565"/>
    </ligand>
</feature>
<feature type="sequence conflict" description="In Ref. 4; BAA32527." evidence="8" ref="4">
    <original>A</original>
    <variation>G</variation>
    <location>
        <position position="21"/>
    </location>
</feature>
<feature type="sequence conflict" description="In Ref. 4; BAA32527." evidence="8" ref="4">
    <original>A</original>
    <variation>P</variation>
    <location>
        <position position="84"/>
    </location>
</feature>
<feature type="sequence conflict" description="In Ref. 4; BAA32527." evidence="8" ref="4">
    <original>S</original>
    <variation>A</variation>
    <location>
        <position position="197"/>
    </location>
</feature>
<feature type="sequence conflict" description="In Ref. 1; BAB31621." evidence="8" ref="1">
    <original>T</original>
    <variation>K</variation>
    <location>
        <position position="262"/>
    </location>
</feature>
<feature type="sequence conflict" description="In Ref. 1; BAB31621." evidence="8" ref="1">
    <original>G</original>
    <variation>A</variation>
    <location>
        <position position="510"/>
    </location>
</feature>
<keyword id="KW-0131">Cell cycle</keyword>
<keyword id="KW-0963">Cytoplasm</keyword>
<keyword id="KW-0342">GTP-binding</keyword>
<keyword id="KW-0378">Hydrolase</keyword>
<keyword id="KW-0866">Nonsense-mediated mRNA decay</keyword>
<keyword id="KW-0547">Nucleotide-binding</keyword>
<keyword id="KW-0648">Protein biosynthesis</keyword>
<keyword id="KW-1185">Reference proteome</keyword>
<evidence type="ECO:0000250" key="1">
    <source>
        <dbReference type="UniProtKB" id="O74718"/>
    </source>
</evidence>
<evidence type="ECO:0000250" key="2">
    <source>
        <dbReference type="UniProtKB" id="Q8IYD1"/>
    </source>
</evidence>
<evidence type="ECO:0000255" key="3">
    <source>
        <dbReference type="PROSITE-ProRule" id="PRU01059"/>
    </source>
</evidence>
<evidence type="ECO:0000256" key="4">
    <source>
        <dbReference type="SAM" id="MobiDB-lite"/>
    </source>
</evidence>
<evidence type="ECO:0000269" key="5">
    <source>
    </source>
</evidence>
<evidence type="ECO:0000269" key="6">
    <source>
    </source>
</evidence>
<evidence type="ECO:0000269" key="7">
    <source>
    </source>
</evidence>
<evidence type="ECO:0000305" key="8"/>
<dbReference type="EC" id="3.6.5.-" evidence="2"/>
<dbReference type="EMBL" id="AK019241">
    <property type="protein sequence ID" value="BAB31621.1"/>
    <property type="status" value="ALT_FRAME"/>
    <property type="molecule type" value="mRNA"/>
</dbReference>
<dbReference type="EMBL" id="AL645466">
    <property type="status" value="NOT_ANNOTATED_CDS"/>
    <property type="molecule type" value="Genomic_DNA"/>
</dbReference>
<dbReference type="EMBL" id="BC117825">
    <property type="protein sequence ID" value="AAI17826.1"/>
    <property type="molecule type" value="mRNA"/>
</dbReference>
<dbReference type="EMBL" id="BC117826">
    <property type="protein sequence ID" value="AAI17827.1"/>
    <property type="molecule type" value="mRNA"/>
</dbReference>
<dbReference type="EMBL" id="AB003503">
    <property type="protein sequence ID" value="BAA32527.1"/>
    <property type="status" value="ALT_INIT"/>
    <property type="molecule type" value="mRNA"/>
</dbReference>
<dbReference type="CCDS" id="CCDS41064.1"/>
<dbReference type="RefSeq" id="NP_032205.2">
    <property type="nucleotide sequence ID" value="NM_008179.2"/>
</dbReference>
<dbReference type="SMR" id="Q149F3"/>
<dbReference type="BioGRID" id="200088">
    <property type="interactions" value="6"/>
</dbReference>
<dbReference type="ComplexPortal" id="CPX-8924">
    <property type="entry name" value="ERF1-ERF3 translation release factor complex, Gspt2 variant"/>
</dbReference>
<dbReference type="FunCoup" id="Q149F3">
    <property type="interactions" value="589"/>
</dbReference>
<dbReference type="IntAct" id="Q149F3">
    <property type="interactions" value="1"/>
</dbReference>
<dbReference type="STRING" id="10090.ENSMUSP00000109523"/>
<dbReference type="GlyGen" id="Q149F3">
    <property type="glycosylation" value="1 site"/>
</dbReference>
<dbReference type="iPTMnet" id="Q149F3"/>
<dbReference type="PhosphoSitePlus" id="Q149F3"/>
<dbReference type="SwissPalm" id="Q149F3"/>
<dbReference type="jPOST" id="Q149F3"/>
<dbReference type="PaxDb" id="10090-ENSMUSP00000109523"/>
<dbReference type="PeptideAtlas" id="Q149F3"/>
<dbReference type="ProteomicsDB" id="275798"/>
<dbReference type="Pumba" id="Q149F3"/>
<dbReference type="Antibodypedia" id="26328">
    <property type="antibodies" value="188 antibodies from 23 providers"/>
</dbReference>
<dbReference type="DNASU" id="14853"/>
<dbReference type="Ensembl" id="ENSMUST00000096368.4">
    <property type="protein sequence ID" value="ENSMUSP00000109523.2"/>
    <property type="gene ID" value="ENSMUSG00000071723.8"/>
</dbReference>
<dbReference type="GeneID" id="14853"/>
<dbReference type="KEGG" id="mmu:14853"/>
<dbReference type="UCSC" id="uc009tto.1">
    <property type="organism name" value="mouse"/>
</dbReference>
<dbReference type="AGR" id="MGI:1316727"/>
<dbReference type="CTD" id="23708"/>
<dbReference type="MGI" id="MGI:1316727">
    <property type="gene designation" value="Gspt2"/>
</dbReference>
<dbReference type="VEuPathDB" id="HostDB:ENSMUSG00000071723"/>
<dbReference type="eggNOG" id="KOG0459">
    <property type="taxonomic scope" value="Eukaryota"/>
</dbReference>
<dbReference type="GeneTree" id="ENSGT00940000163245"/>
<dbReference type="HOGENOM" id="CLU_007265_3_8_1"/>
<dbReference type="InParanoid" id="Q149F3"/>
<dbReference type="OMA" id="IERYEEC"/>
<dbReference type="OrthoDB" id="342024at2759"/>
<dbReference type="PhylomeDB" id="Q149F3"/>
<dbReference type="TreeFam" id="TF300566"/>
<dbReference type="Reactome" id="R-MMU-72764">
    <property type="pathway name" value="Eukaryotic Translation Termination"/>
</dbReference>
<dbReference type="Reactome" id="R-MMU-975956">
    <property type="pathway name" value="Nonsense Mediated Decay (NMD) independent of the Exon Junction Complex (EJC)"/>
</dbReference>
<dbReference type="Reactome" id="R-MMU-975957">
    <property type="pathway name" value="Nonsense Mediated Decay (NMD) enhanced by the Exon Junction Complex (EJC)"/>
</dbReference>
<dbReference type="BioGRID-ORCS" id="14853">
    <property type="hits" value="1 hit in 77 CRISPR screens"/>
</dbReference>
<dbReference type="PRO" id="PR:Q149F3"/>
<dbReference type="Proteomes" id="UP000000589">
    <property type="component" value="Chromosome X"/>
</dbReference>
<dbReference type="RNAct" id="Q149F3">
    <property type="molecule type" value="protein"/>
</dbReference>
<dbReference type="Bgee" id="ENSMUSG00000071723">
    <property type="expression patterns" value="Expressed in seminal vesicle and 220 other cell types or tissues"/>
</dbReference>
<dbReference type="ExpressionAtlas" id="Q149F3">
    <property type="expression patterns" value="baseline and differential"/>
</dbReference>
<dbReference type="GO" id="GO:0005737">
    <property type="term" value="C:cytoplasm"/>
    <property type="evidence" value="ECO:0007669"/>
    <property type="project" value="UniProtKB-SubCell"/>
</dbReference>
<dbReference type="GO" id="GO:0005525">
    <property type="term" value="F:GTP binding"/>
    <property type="evidence" value="ECO:0007669"/>
    <property type="project" value="UniProtKB-KW"/>
</dbReference>
<dbReference type="GO" id="GO:0003924">
    <property type="term" value="F:GTPase activity"/>
    <property type="evidence" value="ECO:0007669"/>
    <property type="project" value="Ensembl"/>
</dbReference>
<dbReference type="GO" id="GO:0003747">
    <property type="term" value="F:translation release factor activity"/>
    <property type="evidence" value="ECO:0007669"/>
    <property type="project" value="Ensembl"/>
</dbReference>
<dbReference type="GO" id="GO:0000184">
    <property type="term" value="P:nuclear-transcribed mRNA catabolic process, nonsense-mediated decay"/>
    <property type="evidence" value="ECO:0007669"/>
    <property type="project" value="UniProtKB-KW"/>
</dbReference>
<dbReference type="CDD" id="cd01883">
    <property type="entry name" value="EF1_alpha"/>
    <property type="match status" value="1"/>
</dbReference>
<dbReference type="CDD" id="cd03704">
    <property type="entry name" value="eRF3_C_III"/>
    <property type="match status" value="1"/>
</dbReference>
<dbReference type="CDD" id="cd04089">
    <property type="entry name" value="eRF3_II"/>
    <property type="match status" value="1"/>
</dbReference>
<dbReference type="FunFam" id="2.40.30.10:FF:000017">
    <property type="entry name" value="Eukaryotic peptide chain release factor GTP-binding subunit"/>
    <property type="match status" value="1"/>
</dbReference>
<dbReference type="FunFam" id="2.40.30.10:FF:000024">
    <property type="entry name" value="Eukaryotic peptide chain release factor GTP-binding subunit ERF3A"/>
    <property type="match status" value="1"/>
</dbReference>
<dbReference type="FunFam" id="3.40.50.300:FF:000270">
    <property type="entry name" value="Eukaryotic peptide chain release factor GTP-binding subunit ERF3A"/>
    <property type="match status" value="1"/>
</dbReference>
<dbReference type="Gene3D" id="3.40.50.300">
    <property type="entry name" value="P-loop containing nucleotide triphosphate hydrolases"/>
    <property type="match status" value="1"/>
</dbReference>
<dbReference type="Gene3D" id="2.40.30.10">
    <property type="entry name" value="Translation factors"/>
    <property type="match status" value="2"/>
</dbReference>
<dbReference type="InterPro" id="IPR004161">
    <property type="entry name" value="EFTu-like_2"/>
</dbReference>
<dbReference type="InterPro" id="IPR031157">
    <property type="entry name" value="G_TR_CS"/>
</dbReference>
<dbReference type="InterPro" id="IPR054696">
    <property type="entry name" value="GTP-eEF1A_C"/>
</dbReference>
<dbReference type="InterPro" id="IPR027417">
    <property type="entry name" value="P-loop_NTPase"/>
</dbReference>
<dbReference type="InterPro" id="IPR009818">
    <property type="entry name" value="PAM2_motif"/>
</dbReference>
<dbReference type="InterPro" id="IPR000795">
    <property type="entry name" value="T_Tr_GTP-bd_dom"/>
</dbReference>
<dbReference type="InterPro" id="IPR050100">
    <property type="entry name" value="TRAFAC_GTPase_members"/>
</dbReference>
<dbReference type="InterPro" id="IPR009000">
    <property type="entry name" value="Transl_B-barrel_sf"/>
</dbReference>
<dbReference type="InterPro" id="IPR009001">
    <property type="entry name" value="Transl_elong_EF1A/Init_IF2_C"/>
</dbReference>
<dbReference type="PANTHER" id="PTHR23115">
    <property type="entry name" value="TRANSLATION FACTOR"/>
    <property type="match status" value="1"/>
</dbReference>
<dbReference type="Pfam" id="PF22594">
    <property type="entry name" value="GTP-eEF1A_C"/>
    <property type="match status" value="1"/>
</dbReference>
<dbReference type="Pfam" id="PF00009">
    <property type="entry name" value="GTP_EFTU"/>
    <property type="match status" value="1"/>
</dbReference>
<dbReference type="Pfam" id="PF03144">
    <property type="entry name" value="GTP_EFTU_D2"/>
    <property type="match status" value="1"/>
</dbReference>
<dbReference type="Pfam" id="PF07145">
    <property type="entry name" value="PAM2"/>
    <property type="match status" value="1"/>
</dbReference>
<dbReference type="PRINTS" id="PR00315">
    <property type="entry name" value="ELONGATNFCT"/>
</dbReference>
<dbReference type="SUPFAM" id="SSF50465">
    <property type="entry name" value="EF-Tu/eEF-1alpha/eIF2-gamma C-terminal domain"/>
    <property type="match status" value="1"/>
</dbReference>
<dbReference type="SUPFAM" id="SSF52540">
    <property type="entry name" value="P-loop containing nucleoside triphosphate hydrolases"/>
    <property type="match status" value="1"/>
</dbReference>
<dbReference type="SUPFAM" id="SSF50447">
    <property type="entry name" value="Translation proteins"/>
    <property type="match status" value="1"/>
</dbReference>
<dbReference type="PROSITE" id="PS00301">
    <property type="entry name" value="G_TR_1"/>
    <property type="match status" value="1"/>
</dbReference>
<dbReference type="PROSITE" id="PS51722">
    <property type="entry name" value="G_TR_2"/>
    <property type="match status" value="1"/>
</dbReference>
<organism>
    <name type="scientific">Mus musculus</name>
    <name type="common">Mouse</name>
    <dbReference type="NCBI Taxonomy" id="10090"/>
    <lineage>
        <taxon>Eukaryota</taxon>
        <taxon>Metazoa</taxon>
        <taxon>Chordata</taxon>
        <taxon>Craniata</taxon>
        <taxon>Vertebrata</taxon>
        <taxon>Euteleostomi</taxon>
        <taxon>Mammalia</taxon>
        <taxon>Eutheria</taxon>
        <taxon>Euarchontoglires</taxon>
        <taxon>Glires</taxon>
        <taxon>Rodentia</taxon>
        <taxon>Myomorpha</taxon>
        <taxon>Muroidea</taxon>
        <taxon>Muridae</taxon>
        <taxon>Murinae</taxon>
        <taxon>Mus</taxon>
        <taxon>Mus</taxon>
    </lineage>
</organism>
<reference key="1">
    <citation type="journal article" date="2005" name="Science">
        <title>The transcriptional landscape of the mammalian genome.</title>
        <authorList>
            <person name="Carninci P."/>
            <person name="Kasukawa T."/>
            <person name="Katayama S."/>
            <person name="Gough J."/>
            <person name="Frith M.C."/>
            <person name="Maeda N."/>
            <person name="Oyama R."/>
            <person name="Ravasi T."/>
            <person name="Lenhard B."/>
            <person name="Wells C."/>
            <person name="Kodzius R."/>
            <person name="Shimokawa K."/>
            <person name="Bajic V.B."/>
            <person name="Brenner S.E."/>
            <person name="Batalov S."/>
            <person name="Forrest A.R."/>
            <person name="Zavolan M."/>
            <person name="Davis M.J."/>
            <person name="Wilming L.G."/>
            <person name="Aidinis V."/>
            <person name="Allen J.E."/>
            <person name="Ambesi-Impiombato A."/>
            <person name="Apweiler R."/>
            <person name="Aturaliya R.N."/>
            <person name="Bailey T.L."/>
            <person name="Bansal M."/>
            <person name="Baxter L."/>
            <person name="Beisel K.W."/>
            <person name="Bersano T."/>
            <person name="Bono H."/>
            <person name="Chalk A.M."/>
            <person name="Chiu K.P."/>
            <person name="Choudhary V."/>
            <person name="Christoffels A."/>
            <person name="Clutterbuck D.R."/>
            <person name="Crowe M.L."/>
            <person name="Dalla E."/>
            <person name="Dalrymple B.P."/>
            <person name="de Bono B."/>
            <person name="Della Gatta G."/>
            <person name="di Bernardo D."/>
            <person name="Down T."/>
            <person name="Engstrom P."/>
            <person name="Fagiolini M."/>
            <person name="Faulkner G."/>
            <person name="Fletcher C.F."/>
            <person name="Fukushima T."/>
            <person name="Furuno M."/>
            <person name="Futaki S."/>
            <person name="Gariboldi M."/>
            <person name="Georgii-Hemming P."/>
            <person name="Gingeras T.R."/>
            <person name="Gojobori T."/>
            <person name="Green R.E."/>
            <person name="Gustincich S."/>
            <person name="Harbers M."/>
            <person name="Hayashi Y."/>
            <person name="Hensch T.K."/>
            <person name="Hirokawa N."/>
            <person name="Hill D."/>
            <person name="Huminiecki L."/>
            <person name="Iacono M."/>
            <person name="Ikeo K."/>
            <person name="Iwama A."/>
            <person name="Ishikawa T."/>
            <person name="Jakt M."/>
            <person name="Kanapin A."/>
            <person name="Katoh M."/>
            <person name="Kawasawa Y."/>
            <person name="Kelso J."/>
            <person name="Kitamura H."/>
            <person name="Kitano H."/>
            <person name="Kollias G."/>
            <person name="Krishnan S.P."/>
            <person name="Kruger A."/>
            <person name="Kummerfeld S.K."/>
            <person name="Kurochkin I.V."/>
            <person name="Lareau L.F."/>
            <person name="Lazarevic D."/>
            <person name="Lipovich L."/>
            <person name="Liu J."/>
            <person name="Liuni S."/>
            <person name="McWilliam S."/>
            <person name="Madan Babu M."/>
            <person name="Madera M."/>
            <person name="Marchionni L."/>
            <person name="Matsuda H."/>
            <person name="Matsuzawa S."/>
            <person name="Miki H."/>
            <person name="Mignone F."/>
            <person name="Miyake S."/>
            <person name="Morris K."/>
            <person name="Mottagui-Tabar S."/>
            <person name="Mulder N."/>
            <person name="Nakano N."/>
            <person name="Nakauchi H."/>
            <person name="Ng P."/>
            <person name="Nilsson R."/>
            <person name="Nishiguchi S."/>
            <person name="Nishikawa S."/>
            <person name="Nori F."/>
            <person name="Ohara O."/>
            <person name="Okazaki Y."/>
            <person name="Orlando V."/>
            <person name="Pang K.C."/>
            <person name="Pavan W.J."/>
            <person name="Pavesi G."/>
            <person name="Pesole G."/>
            <person name="Petrovsky N."/>
            <person name="Piazza S."/>
            <person name="Reed J."/>
            <person name="Reid J.F."/>
            <person name="Ring B.Z."/>
            <person name="Ringwald M."/>
            <person name="Rost B."/>
            <person name="Ruan Y."/>
            <person name="Salzberg S.L."/>
            <person name="Sandelin A."/>
            <person name="Schneider C."/>
            <person name="Schoenbach C."/>
            <person name="Sekiguchi K."/>
            <person name="Semple C.A."/>
            <person name="Seno S."/>
            <person name="Sessa L."/>
            <person name="Sheng Y."/>
            <person name="Shibata Y."/>
            <person name="Shimada H."/>
            <person name="Shimada K."/>
            <person name="Silva D."/>
            <person name="Sinclair B."/>
            <person name="Sperling S."/>
            <person name="Stupka E."/>
            <person name="Sugiura K."/>
            <person name="Sultana R."/>
            <person name="Takenaka Y."/>
            <person name="Taki K."/>
            <person name="Tammoja K."/>
            <person name="Tan S.L."/>
            <person name="Tang S."/>
            <person name="Taylor M.S."/>
            <person name="Tegner J."/>
            <person name="Teichmann S.A."/>
            <person name="Ueda H.R."/>
            <person name="van Nimwegen E."/>
            <person name="Verardo R."/>
            <person name="Wei C.L."/>
            <person name="Yagi K."/>
            <person name="Yamanishi H."/>
            <person name="Zabarovsky E."/>
            <person name="Zhu S."/>
            <person name="Zimmer A."/>
            <person name="Hide W."/>
            <person name="Bult C."/>
            <person name="Grimmond S.M."/>
            <person name="Teasdale R.D."/>
            <person name="Liu E.T."/>
            <person name="Brusic V."/>
            <person name="Quackenbush J."/>
            <person name="Wahlestedt C."/>
            <person name="Mattick J.S."/>
            <person name="Hume D.A."/>
            <person name="Kai C."/>
            <person name="Sasaki D."/>
            <person name="Tomaru Y."/>
            <person name="Fukuda S."/>
            <person name="Kanamori-Katayama M."/>
            <person name="Suzuki M."/>
            <person name="Aoki J."/>
            <person name="Arakawa T."/>
            <person name="Iida J."/>
            <person name="Imamura K."/>
            <person name="Itoh M."/>
            <person name="Kato T."/>
            <person name="Kawaji H."/>
            <person name="Kawagashira N."/>
            <person name="Kawashima T."/>
            <person name="Kojima M."/>
            <person name="Kondo S."/>
            <person name="Konno H."/>
            <person name="Nakano K."/>
            <person name="Ninomiya N."/>
            <person name="Nishio T."/>
            <person name="Okada M."/>
            <person name="Plessy C."/>
            <person name="Shibata K."/>
            <person name="Shiraki T."/>
            <person name="Suzuki S."/>
            <person name="Tagami M."/>
            <person name="Waki K."/>
            <person name="Watahiki A."/>
            <person name="Okamura-Oho Y."/>
            <person name="Suzuki H."/>
            <person name="Kawai J."/>
            <person name="Hayashizaki Y."/>
        </authorList>
    </citation>
    <scope>NUCLEOTIDE SEQUENCE [LARGE SCALE MRNA]</scope>
    <source>
        <strain>C57BL/6J</strain>
        <tissue>Embryo</tissue>
    </source>
</reference>
<reference key="2">
    <citation type="journal article" date="2009" name="PLoS Biol.">
        <title>Lineage-specific biology revealed by a finished genome assembly of the mouse.</title>
        <authorList>
            <person name="Church D.M."/>
            <person name="Goodstadt L."/>
            <person name="Hillier L.W."/>
            <person name="Zody M.C."/>
            <person name="Goldstein S."/>
            <person name="She X."/>
            <person name="Bult C.J."/>
            <person name="Agarwala R."/>
            <person name="Cherry J.L."/>
            <person name="DiCuccio M."/>
            <person name="Hlavina W."/>
            <person name="Kapustin Y."/>
            <person name="Meric P."/>
            <person name="Maglott D."/>
            <person name="Birtle Z."/>
            <person name="Marques A.C."/>
            <person name="Graves T."/>
            <person name="Zhou S."/>
            <person name="Teague B."/>
            <person name="Potamousis K."/>
            <person name="Churas C."/>
            <person name="Place M."/>
            <person name="Herschleb J."/>
            <person name="Runnheim R."/>
            <person name="Forrest D."/>
            <person name="Amos-Landgraf J."/>
            <person name="Schwartz D.C."/>
            <person name="Cheng Z."/>
            <person name="Lindblad-Toh K."/>
            <person name="Eichler E.E."/>
            <person name="Ponting C.P."/>
        </authorList>
    </citation>
    <scope>NUCLEOTIDE SEQUENCE [LARGE SCALE GENOMIC DNA]</scope>
    <source>
        <strain>C57BL/6J</strain>
    </source>
</reference>
<reference key="3">
    <citation type="journal article" date="2004" name="Genome Res.">
        <title>The status, quality, and expansion of the NIH full-length cDNA project: the Mammalian Gene Collection (MGC).</title>
        <authorList>
            <consortium name="The MGC Project Team"/>
        </authorList>
    </citation>
    <scope>NUCLEOTIDE SEQUENCE [LARGE SCALE MRNA]</scope>
</reference>
<reference key="4">
    <citation type="journal article" date="1998" name="J. Biol. Chem.">
        <title>Molecular cloning of a novel member of the eukaryotic polypeptide chain-releasing factors (eRF). Its identification as eRF3 interacting with eRF1.</title>
        <authorList>
            <person name="Hoshino S."/>
            <person name="Imai M."/>
            <person name="Mizutani M."/>
            <person name="Kikuchi Y."/>
            <person name="Hanaoka F."/>
            <person name="Ui M."/>
            <person name="Katada T."/>
        </authorList>
    </citation>
    <scope>NUCLEOTIDE SEQUENCE [MRNA] OF 21-632</scope>
    <scope>INTERACTION WITH ETF1</scope>
    <scope>TISSUE SPECIFICITY</scope>
</reference>
<reference key="5">
    <citation type="journal article" date="2002" name="Genes Cells">
        <title>Mouse GSPT2, but not GSPT1, can substitute for yeast eRF3 in vivo.</title>
        <authorList>
            <person name="Le Goff C."/>
            <person name="Zemlyanko O."/>
            <person name="Moskalenko S."/>
            <person name="Berkova N."/>
            <person name="Inge-Vechtomov S."/>
            <person name="Philippe M."/>
            <person name="Zhouravleva G."/>
        </authorList>
    </citation>
    <scope>INTERACTION WITH ETF1</scope>
    <scope>FUNCTION</scope>
</reference>
<reference key="6">
    <citation type="journal article" date="2005" name="Mol. Cell. Biol.">
        <title>Involvement of human release factors eRF3a and eRF3b in translation termination and regulation of the termination complex formation.</title>
        <authorList>
            <person name="Chauvin C."/>
            <person name="Salhi S."/>
            <person name="Le Goff C."/>
            <person name="Viranaicken W."/>
            <person name="Diop D."/>
            <person name="Jean-Jean O."/>
        </authorList>
    </citation>
    <scope>DEVELOPMENTAL STAGE</scope>
</reference>
<reference key="7">
    <citation type="journal article" date="2010" name="Cell">
        <title>A tissue-specific atlas of mouse protein phosphorylation and expression.</title>
        <authorList>
            <person name="Huttlin E.L."/>
            <person name="Jedrychowski M.P."/>
            <person name="Elias J.E."/>
            <person name="Goswami T."/>
            <person name="Rad R."/>
            <person name="Beausoleil S.A."/>
            <person name="Villen J."/>
            <person name="Haas W."/>
            <person name="Sowa M.E."/>
            <person name="Gygi S.P."/>
        </authorList>
    </citation>
    <scope>IDENTIFICATION BY MASS SPECTROMETRY [LARGE SCALE ANALYSIS]</scope>
    <source>
        <tissue>Brain</tissue>
    </source>
</reference>